<feature type="chain" id="PRO_0000142596" description="Hemagglutinin glycoprotein">
    <location>
        <begin position="1"/>
        <end position="607"/>
    </location>
</feature>
<feature type="topological domain" description="Intravirion" evidence="2">
    <location>
        <begin position="1"/>
        <end position="37"/>
    </location>
</feature>
<feature type="transmembrane region" description="Helical" evidence="2">
    <location>
        <begin position="38"/>
        <end position="58"/>
    </location>
</feature>
<feature type="topological domain" description="Virion surface" evidence="2">
    <location>
        <begin position="59"/>
        <end position="607"/>
    </location>
</feature>
<feature type="glycosylation site" description="N-linked (GlcNAc...) asparagine; by host" evidence="2">
    <location>
        <position position="149"/>
    </location>
</feature>
<feature type="glycosylation site" description="N-linked (GlcNAc...) asparagine; by host" evidence="2">
    <location>
        <position position="391"/>
    </location>
</feature>
<feature type="glycosylation site" description="N-linked (GlcNAc...) asparagine; by host" evidence="2">
    <location>
        <position position="422"/>
    </location>
</feature>
<feature type="glycosylation site" description="N-linked (GlcNAc...) asparagine; by host" evidence="2">
    <location>
        <position position="456"/>
    </location>
</feature>
<feature type="glycosylation site" description="N-linked (GlcNAc...) asparagine; by host" evidence="2">
    <location>
        <position position="587"/>
    </location>
</feature>
<feature type="glycosylation site" description="N-linked (GlcNAc...) asparagine; by host" evidence="2">
    <location>
        <position position="603"/>
    </location>
</feature>
<organismHost>
    <name type="scientific">Ailuropoda melanoleuca</name>
    <name type="common">Giant panda</name>
    <dbReference type="NCBI Taxonomy" id="9646"/>
</organismHost>
<organismHost>
    <name type="scientific">Ailurus fulgens</name>
    <name type="common">Himalayan red panda</name>
    <dbReference type="NCBI Taxonomy" id="9649"/>
</organismHost>
<organismHost>
    <name type="scientific">Canis lupus familiaris</name>
    <name type="common">Dog</name>
    <name type="synonym">Canis familiaris</name>
    <dbReference type="NCBI Taxonomy" id="9615"/>
</organismHost>
<organismHost>
    <name type="scientific">Mustela</name>
    <dbReference type="NCBI Taxonomy" id="9665"/>
</organismHost>
<organismHost>
    <name type="scientific">Panthera leo</name>
    <name type="common">Lion</name>
    <dbReference type="NCBI Taxonomy" id="9689"/>
</organismHost>
<organismHost>
    <name type="scientific">Procyon lotor</name>
    <name type="common">Raccoon</name>
    <dbReference type="NCBI Taxonomy" id="9654"/>
</organismHost>
<organismHost>
    <name type="scientific">Zalophus californianus</name>
    <name type="common">California sealion</name>
    <dbReference type="NCBI Taxonomy" id="9704"/>
</organismHost>
<protein>
    <recommendedName>
        <fullName>Hemagglutinin glycoprotein</fullName>
    </recommendedName>
</protein>
<sequence length="607" mass="68198">MLSYQDKAGAFYKDNARANSTKLSLVTEEHGGRRPPYLLFVLLVLLVGILALLAITGVRFHQVSTSNMEFSRLLKEDMEKSEAVHHQVIDVLTPLFKIIGDEIGSRLPQKLNEIKQFILQKTNFFNPNREFDFRDLHWCINPPSKVKVNFTNYCESIGIRKAIASAANPILLSALPGGRSDIFPPHRCSGATTSVGKVFPLSVSLSMSLISRTSEIINMLTAISDGVYGKTYLLAPDDIEREFDTQEIRVFEIGFIKRWLNDMPSLQTTNYMVLPENSKAKVCTIAVGELTLASLCVEESTVLLYHDSSGSQDGILVVTLGIFGTTPMDHIEEVIPVAHPSMEKIHITNHRGFIKDSIATWMVPALASEKQEEQKGCLESACQRKPYPMCNQTSWEPFGGRQLPSYGRLTLPLDASVDLQLNISFTYGPVILNGDGMDYYESPLLNSGWLTIPPKNGTILGLINKAGRGDQFTVIPHVLTFAPMESSGNCYLPIQTSQIIDRDVLIESNLVVLPTQSFRYVIATYDISRSDHAIVYYVYDPIRTISYTHPFRLTTKGRPDFLRIECFVWDDNLWCHQFYRFEANIANSTTSVENLVRIRFSCNRSNP</sequence>
<comment type="function">
    <text evidence="1">Attaches the virus to cell receptors and thereby initiating infection. Binding of H protein to the receptor induces a conformational change that allows the F protein to trigger virion/cell membranes fusion. The cellular receptor might be SLAM, and may explain the lymphotropism of the virus (By similarity).</text>
</comment>
<comment type="subunit">
    <text evidence="1">Binds canine SLAMF1 at the cell surface.</text>
</comment>
<comment type="subcellular location">
    <subcellularLocation>
        <location evidence="3">Virion membrane</location>
        <topology evidence="3">Single-pass type II membrane protein</topology>
    </subcellularLocation>
    <subcellularLocation>
        <location evidence="1">Host cell membrane</location>
        <topology evidence="1">Single-pass type II membrane protein</topology>
    </subcellularLocation>
</comment>
<comment type="similarity">
    <text evidence="3">Belongs to the paramyxoviruses hemagglutinin-neuraminidase family. Non-sialidase subfamily.</text>
</comment>
<comment type="caution">
    <text evidence="3">Morbiliviruses hemagglutinins have no neuraminidase activity.</text>
</comment>
<gene>
    <name type="primary">H</name>
</gene>
<name>HEMA_CDVC</name>
<accession>Q65999</accession>
<reference key="1">
    <citation type="journal article" date="1991" name="Virus Res.">
        <title>The nucleotide and predicted amino acid sequence of the attachment protein of canine distemper virus.</title>
        <authorList>
            <person name="Koevamees J."/>
            <person name="Blixenkrone-Moeller M."/>
            <person name="Norrby E."/>
        </authorList>
    </citation>
    <scope>NUCLEOTIDE SEQUENCE [GENOMIC RNA]</scope>
</reference>
<organism>
    <name type="scientific">Canine distemper virus (strain Convac vaccine)</name>
    <name type="common">CDV</name>
    <dbReference type="NCBI Taxonomy" id="82828"/>
    <lineage>
        <taxon>Viruses</taxon>
        <taxon>Riboviria</taxon>
        <taxon>Orthornavirae</taxon>
        <taxon>Negarnaviricota</taxon>
        <taxon>Haploviricotina</taxon>
        <taxon>Monjiviricetes</taxon>
        <taxon>Mononegavirales</taxon>
        <taxon>Paramyxoviridae</taxon>
        <taxon>Orthoparamyxovirinae</taxon>
        <taxon>Morbillivirus</taxon>
        <taxon>Morbillivirus canis</taxon>
    </lineage>
</organism>
<evidence type="ECO:0000250" key="1"/>
<evidence type="ECO:0000255" key="2"/>
<evidence type="ECO:0000305" key="3"/>
<proteinExistence type="inferred from homology"/>
<dbReference type="EMBL" id="Z35493">
    <property type="protein sequence ID" value="CAA84626.1"/>
    <property type="molecule type" value="Genomic_RNA"/>
</dbReference>
<dbReference type="PIR" id="S49017">
    <property type="entry name" value="S49017"/>
</dbReference>
<dbReference type="SMR" id="Q65999"/>
<dbReference type="GlyCosmos" id="Q65999">
    <property type="glycosylation" value="6 sites, No reported glycans"/>
</dbReference>
<dbReference type="GO" id="GO:0020002">
    <property type="term" value="C:host cell plasma membrane"/>
    <property type="evidence" value="ECO:0007669"/>
    <property type="project" value="UniProtKB-SubCell"/>
</dbReference>
<dbReference type="GO" id="GO:0016020">
    <property type="term" value="C:membrane"/>
    <property type="evidence" value="ECO:0007669"/>
    <property type="project" value="UniProtKB-KW"/>
</dbReference>
<dbReference type="GO" id="GO:0019031">
    <property type="term" value="C:viral envelope"/>
    <property type="evidence" value="ECO:0007669"/>
    <property type="project" value="UniProtKB-KW"/>
</dbReference>
<dbReference type="GO" id="GO:0055036">
    <property type="term" value="C:virion membrane"/>
    <property type="evidence" value="ECO:0007669"/>
    <property type="project" value="UniProtKB-SubCell"/>
</dbReference>
<dbReference type="GO" id="GO:0046789">
    <property type="term" value="F:host cell surface receptor binding"/>
    <property type="evidence" value="ECO:0007669"/>
    <property type="project" value="InterPro"/>
</dbReference>
<dbReference type="GO" id="GO:0046718">
    <property type="term" value="P:symbiont entry into host cell"/>
    <property type="evidence" value="ECO:0007669"/>
    <property type="project" value="UniProtKB-KW"/>
</dbReference>
<dbReference type="GO" id="GO:0019062">
    <property type="term" value="P:virion attachment to host cell"/>
    <property type="evidence" value="ECO:0007669"/>
    <property type="project" value="UniProtKB-KW"/>
</dbReference>
<dbReference type="Gene3D" id="2.120.10.10">
    <property type="match status" value="1"/>
</dbReference>
<dbReference type="InterPro" id="IPR000665">
    <property type="entry name" value="Hemagglutn/HN"/>
</dbReference>
<dbReference type="InterPro" id="IPR036278">
    <property type="entry name" value="Sialidase_sf"/>
</dbReference>
<dbReference type="Pfam" id="PF00423">
    <property type="entry name" value="HN"/>
    <property type="match status" value="1"/>
</dbReference>
<dbReference type="SUPFAM" id="SSF50939">
    <property type="entry name" value="Sialidases"/>
    <property type="match status" value="1"/>
</dbReference>
<keyword id="KW-0325">Glycoprotein</keyword>
<keyword id="KW-0348">Hemagglutinin</keyword>
<keyword id="KW-1032">Host cell membrane</keyword>
<keyword id="KW-1043">Host membrane</keyword>
<keyword id="KW-0945">Host-virus interaction</keyword>
<keyword id="KW-0472">Membrane</keyword>
<keyword id="KW-0735">Signal-anchor</keyword>
<keyword id="KW-0812">Transmembrane</keyword>
<keyword id="KW-1133">Transmembrane helix</keyword>
<keyword id="KW-1161">Viral attachment to host cell</keyword>
<keyword id="KW-0261">Viral envelope protein</keyword>
<keyword id="KW-0946">Virion</keyword>
<keyword id="KW-1160">Virus entry into host cell</keyword>